<proteinExistence type="evidence at protein level"/>
<evidence type="ECO:0000250" key="1">
    <source>
        <dbReference type="UniProtKB" id="P26297"/>
    </source>
</evidence>
<evidence type="ECO:0000269" key="2">
    <source>
    </source>
</evidence>
<evidence type="ECO:0000269" key="3">
    <source>
    </source>
</evidence>
<evidence type="ECO:0000303" key="4">
    <source>
    </source>
</evidence>
<evidence type="ECO:0000303" key="5">
    <source>
    </source>
</evidence>
<evidence type="ECO:0000305" key="6"/>
<evidence type="ECO:0000312" key="7">
    <source>
        <dbReference type="EMBL" id="EDU39261.1"/>
    </source>
</evidence>
<protein>
    <recommendedName>
        <fullName evidence="6">Aromatic 2-oxoacid reductase</fullName>
        <ecNumber evidence="2 3">1.1.1.110</ecNumber>
    </recommendedName>
    <alternativeName>
        <fullName evidence="5">Indolelactate dehydrogenase</fullName>
    </alternativeName>
</protein>
<organism>
    <name type="scientific">Clostridium sporogenes (strain ATCC 15579)</name>
    <dbReference type="NCBI Taxonomy" id="471871"/>
    <lineage>
        <taxon>Bacteria</taxon>
        <taxon>Bacillati</taxon>
        <taxon>Bacillota</taxon>
        <taxon>Clostridia</taxon>
        <taxon>Eubacteriales</taxon>
        <taxon>Clostridiaceae</taxon>
        <taxon>Clostridium</taxon>
    </lineage>
</organism>
<reference key="1">
    <citation type="submission" date="2008-05" db="EMBL/GenBank/DDBJ databases">
        <title>Draft genome sequence of Clostridium sporogenes ATCC 15579.</title>
        <authorList>
            <person name="Sudarsanam P."/>
            <person name="Ley R."/>
            <person name="Guruge J."/>
            <person name="Turnbaugh P.J."/>
            <person name="Mahowald M."/>
            <person name="Liep D."/>
            <person name="Gordon J."/>
            <person name="Fulton L."/>
            <person name="Clifton S."/>
            <person name="Fulton B."/>
            <person name="Xu J."/>
            <person name="Minx P."/>
            <person name="Pepin K.H."/>
            <person name="Johnson M."/>
            <person name="Thiruvilangam P."/>
            <person name="Bhonagiri V."/>
            <person name="Nash W.E."/>
            <person name="Mardis E.R."/>
            <person name="Wilson R.K."/>
        </authorList>
    </citation>
    <scope>NUCLEOTIDE SEQUENCE [LARGE SCALE GENOMIC DNA]</scope>
    <source>
        <strain>ATCC 15579</strain>
    </source>
</reference>
<reference key="2">
    <citation type="journal article" date="1968" name="Can. J. Microbiol.">
        <title>Indolelactate dehydrogenase from Clostridium sporogenes.</title>
        <authorList>
            <person name="Jean M."/>
            <person name="DeMoss R.D."/>
        </authorList>
    </citation>
    <scope>FUNCTION</scope>
    <scope>CATALYTIC ACTIVITY</scope>
    <scope>BIOPHYSICOCHEMICAL PROPERTIES</scope>
    <source>
        <strain>175</strain>
    </source>
</reference>
<reference key="3">
    <citation type="journal article" date="2017" name="Nature">
        <title>A gut bacterial pathway metabolizes aromatic amino acids into nine circulating metabolites.</title>
        <authorList>
            <person name="Dodd D."/>
            <person name="Spitzer M.H."/>
            <person name="Van Treuren W."/>
            <person name="Merrill B.D."/>
            <person name="Hryckowian A.J."/>
            <person name="Higginbottom S.K."/>
            <person name="Le A."/>
            <person name="Cowan T.M."/>
            <person name="Nolan G.P."/>
            <person name="Fischbach M.A."/>
            <person name="Sonnenburg J.L."/>
        </authorList>
    </citation>
    <scope>FUNCTION</scope>
    <scope>CATALYTIC ACTIVITY</scope>
    <scope>DISRUPTION PHENOTYPE</scope>
    <scope>PATHWAY</scope>
    <source>
        <strain>ATCC 15579</strain>
    </source>
</reference>
<gene>
    <name evidence="4" type="primary">fldH</name>
    <name evidence="7" type="ORF">CLOSPO_00316</name>
</gene>
<sequence length="331" mass="36592">MKILAYCVRPDEIDSFKNFSEKYGHTVDLIPDSFGPNVAHLAKGYDGISILGNDTCNREALEKIKDCGIKYLATRTAGVNNIDFDAAKEFGINVANVPAYSPNSVSEFTVGLALSLTRKIPFALKRVELNNFALGGLIGVELRNLTLGVIGTGRIGLKVIEGFSGFGMKKMIGYDIFENEKAKEYIEYKSLDEVYKEADIITLHAPLTDDNYHMIGKESIAKMKDGVFIINAARGALIDSEALIEGLKSGKIAGAALDSYEYEQGVFHNNKMNEIMKDDTLERLKSFPNVVITPHLGFYTDEAVSNMVEITLMNLQEFELKGTCKNQRVCK</sequence>
<name>FLDH_CLOS1</name>
<accession>J7SHB8</accession>
<feature type="chain" id="PRO_0000454347" description="Aromatic 2-oxoacid reductase">
    <location>
        <begin position="1"/>
        <end position="331"/>
    </location>
</feature>
<feature type="active site" evidence="1">
    <location>
        <position position="234"/>
    </location>
</feature>
<feature type="active site" evidence="1">
    <location>
        <position position="263"/>
    </location>
</feature>
<feature type="active site" description="Proton donor" evidence="1">
    <location>
        <position position="295"/>
    </location>
</feature>
<feature type="binding site" evidence="1">
    <location>
        <begin position="154"/>
        <end position="155"/>
    </location>
    <ligand>
        <name>NAD(+)</name>
        <dbReference type="ChEBI" id="CHEBI:57540"/>
    </ligand>
</feature>
<feature type="binding site" evidence="1">
    <location>
        <position position="175"/>
    </location>
    <ligand>
        <name>NAD(+)</name>
        <dbReference type="ChEBI" id="CHEBI:57540"/>
    </ligand>
</feature>
<feature type="binding site" evidence="1">
    <location>
        <begin position="205"/>
        <end position="206"/>
    </location>
    <ligand>
        <name>NAD(+)</name>
        <dbReference type="ChEBI" id="CHEBI:57540"/>
    </ligand>
</feature>
<feature type="binding site" evidence="1">
    <location>
        <position position="211"/>
    </location>
    <ligand>
        <name>NAD(+)</name>
        <dbReference type="ChEBI" id="CHEBI:57540"/>
    </ligand>
</feature>
<feature type="binding site" evidence="1">
    <location>
        <begin position="232"/>
        <end position="234"/>
    </location>
    <ligand>
        <name>NAD(+)</name>
        <dbReference type="ChEBI" id="CHEBI:57540"/>
    </ligand>
</feature>
<feature type="binding site" evidence="1">
    <location>
        <position position="258"/>
    </location>
    <ligand>
        <name>NAD(+)</name>
        <dbReference type="ChEBI" id="CHEBI:57540"/>
    </ligand>
</feature>
<comment type="function">
    <text evidence="2 3">Essential for the reductive metabolism of L-phenylalanine, L-tyrosine and L-tryptophan (PubMed:29168502). Catalyzes the conversion of phenylpyruvic acid to phenyllactic acid, 4-hydroxy-phenylpyruvic acid to 4-hydroxy-phenyllactic acid, and indolepyruvic acid to indolelactic acid (PubMed:29168502, PubMed:4384683).</text>
</comment>
<comment type="catalytic activity">
    <reaction evidence="2 3">
        <text>(R)-3-phenyllactate + NAD(+) = 3-phenylpyruvate + NADH + H(+)</text>
        <dbReference type="Rhea" id="RHEA:38351"/>
        <dbReference type="ChEBI" id="CHEBI:11009"/>
        <dbReference type="ChEBI" id="CHEBI:15378"/>
        <dbReference type="ChEBI" id="CHEBI:18005"/>
        <dbReference type="ChEBI" id="CHEBI:57540"/>
        <dbReference type="ChEBI" id="CHEBI:57945"/>
        <dbReference type="EC" id="1.1.1.110"/>
    </reaction>
    <physiologicalReaction direction="right-to-left" evidence="2">
        <dbReference type="Rhea" id="RHEA:38353"/>
    </physiologicalReaction>
</comment>
<comment type="catalytic activity">
    <reaction evidence="2 3">
        <text>(2R)-2-hydroxy-3-(4-hydroxyphenyl)propanoate + NAD(+) = 3-(4-hydroxyphenyl)pyruvate + NADH + H(+)</text>
        <dbReference type="Rhea" id="RHEA:10780"/>
        <dbReference type="ChEBI" id="CHEBI:10980"/>
        <dbReference type="ChEBI" id="CHEBI:15378"/>
        <dbReference type="ChEBI" id="CHEBI:36242"/>
        <dbReference type="ChEBI" id="CHEBI:57540"/>
        <dbReference type="ChEBI" id="CHEBI:57945"/>
        <dbReference type="EC" id="1.1.1.110"/>
    </reaction>
    <physiologicalReaction direction="right-to-left" evidence="2">
        <dbReference type="Rhea" id="RHEA:10782"/>
    </physiologicalReaction>
</comment>
<comment type="catalytic activity">
    <reaction evidence="2 3">
        <text>3-(indol-3-yl)lactate + NAD(+) = indole-3-pyruvate + NADH + H(+)</text>
        <dbReference type="Rhea" id="RHEA:20133"/>
        <dbReference type="ChEBI" id="CHEBI:15378"/>
        <dbReference type="ChEBI" id="CHEBI:17282"/>
        <dbReference type="ChEBI" id="CHEBI:17640"/>
        <dbReference type="ChEBI" id="CHEBI:57540"/>
        <dbReference type="ChEBI" id="CHEBI:57945"/>
        <dbReference type="EC" id="1.1.1.110"/>
    </reaction>
    <physiologicalReaction direction="right-to-left" evidence="2">
        <dbReference type="Rhea" id="RHEA:20135"/>
    </physiologicalReaction>
</comment>
<comment type="biophysicochemical properties">
    <kinetics>
        <KM evidence="3">0.075 mM for p-hydroxyphenylpyruvate</KM>
        <KM evidence="3">0.106 mM for phenylpyruvate</KM>
        <KM evidence="3">0.0142 mM for NADH (in the presence of indolepyruvate)</KM>
        <KM evidence="3">1.03 mM for indolelactate</KM>
        <KM evidence="3">1.77 mM for p-hydroxyphenyllactate</KM>
        <KM evidence="3">2.21 mM for phenyllactate</KM>
        <KM evidence="3">0.691 mM for indoleglycollate</KM>
        <KM evidence="3">0.195 mM for NAD(+) (in the presence of indolelactate)</KM>
    </kinetics>
    <phDependence>
        <text evidence="3">Optimum pH is 7.0 for indolepyruvate reduction. Optimum pH is 8.5 for indolelactate oxidation.</text>
    </phDependence>
</comment>
<comment type="pathway">
    <text evidence="2">Amino-acid degradation.</text>
</comment>
<comment type="disruption phenotype">
    <text evidence="2">Mutants are deficient in reductive metabolism of phenylalanine, tyrosine and tryptophan, and exhibit growth defects when cultured with amino acids as the sole carbon source.</text>
</comment>
<comment type="similarity">
    <text evidence="6">Belongs to the D-isomer specific 2-hydroxyacid dehydrogenase family.</text>
</comment>
<keyword id="KW-0520">NAD</keyword>
<keyword id="KW-0560">Oxidoreductase</keyword>
<keyword id="KW-0585">Phenylalanine catabolism</keyword>
<keyword id="KW-0823">Tryptophan catabolism</keyword>
<keyword id="KW-0828">Tyrosine catabolism</keyword>
<dbReference type="EC" id="1.1.1.110" evidence="2 3"/>
<dbReference type="EMBL" id="ABKW02000002">
    <property type="protein sequence ID" value="EDU39261.1"/>
    <property type="molecule type" value="Genomic_DNA"/>
</dbReference>
<dbReference type="RefSeq" id="WP_003483291.1">
    <property type="nucleotide sequence ID" value="NZ_DS981517.1"/>
</dbReference>
<dbReference type="SMR" id="J7SHB8"/>
<dbReference type="HOGENOM" id="CLU_019796_1_1_9"/>
<dbReference type="GO" id="GO:0033711">
    <property type="term" value="F:4-phosphoerythronate dehydrogenase activity"/>
    <property type="evidence" value="ECO:0007669"/>
    <property type="project" value="UniProtKB-EC"/>
</dbReference>
<dbReference type="GO" id="GO:0008720">
    <property type="term" value="F:D-lactate dehydrogenase activity"/>
    <property type="evidence" value="ECO:0007669"/>
    <property type="project" value="TreeGrafter"/>
</dbReference>
<dbReference type="GO" id="GO:0047995">
    <property type="term" value="F:hydroxyphenylpyruvate reductase activity"/>
    <property type="evidence" value="ECO:0007669"/>
    <property type="project" value="RHEA"/>
</dbReference>
<dbReference type="GO" id="GO:0047722">
    <property type="term" value="F:indolelactate dehydrogenase (NAD+) activity"/>
    <property type="evidence" value="ECO:0007669"/>
    <property type="project" value="RHEA"/>
</dbReference>
<dbReference type="GO" id="GO:0051287">
    <property type="term" value="F:NAD binding"/>
    <property type="evidence" value="ECO:0007669"/>
    <property type="project" value="InterPro"/>
</dbReference>
<dbReference type="GO" id="GO:0097256">
    <property type="term" value="F:phenyllactate dehydrogenase (NAD+) activity"/>
    <property type="evidence" value="ECO:0007669"/>
    <property type="project" value="RHEA"/>
</dbReference>
<dbReference type="GO" id="GO:0006559">
    <property type="term" value="P:L-phenylalanine catabolic process"/>
    <property type="evidence" value="ECO:0007669"/>
    <property type="project" value="UniProtKB-KW"/>
</dbReference>
<dbReference type="GO" id="GO:0006569">
    <property type="term" value="P:L-tryptophan catabolic process"/>
    <property type="evidence" value="ECO:0007669"/>
    <property type="project" value="UniProtKB-KW"/>
</dbReference>
<dbReference type="GO" id="GO:0006572">
    <property type="term" value="P:tyrosine catabolic process"/>
    <property type="evidence" value="ECO:0007669"/>
    <property type="project" value="UniProtKB-KW"/>
</dbReference>
<dbReference type="CDD" id="cd12185">
    <property type="entry name" value="HGDH_LDH_like"/>
    <property type="match status" value="1"/>
</dbReference>
<dbReference type="Gene3D" id="3.40.50.720">
    <property type="entry name" value="NAD(P)-binding Rossmann-like Domain"/>
    <property type="match status" value="2"/>
</dbReference>
<dbReference type="InterPro" id="IPR006139">
    <property type="entry name" value="D-isomer_2_OHA_DH_cat_dom"/>
</dbReference>
<dbReference type="InterPro" id="IPR029753">
    <property type="entry name" value="D-isomer_DH_CS"/>
</dbReference>
<dbReference type="InterPro" id="IPR029752">
    <property type="entry name" value="D-isomer_DH_CS1"/>
</dbReference>
<dbReference type="InterPro" id="IPR006140">
    <property type="entry name" value="D-isomer_DH_NAD-bd"/>
</dbReference>
<dbReference type="InterPro" id="IPR036291">
    <property type="entry name" value="NAD(P)-bd_dom_sf"/>
</dbReference>
<dbReference type="PANTHER" id="PTHR43026">
    <property type="entry name" value="2-HYDROXYACID DEHYDROGENASE HOMOLOG 1-RELATED"/>
    <property type="match status" value="1"/>
</dbReference>
<dbReference type="PANTHER" id="PTHR43026:SF1">
    <property type="entry name" value="2-HYDROXYACID DEHYDROGENASE HOMOLOG 1-RELATED"/>
    <property type="match status" value="1"/>
</dbReference>
<dbReference type="Pfam" id="PF00389">
    <property type="entry name" value="2-Hacid_dh"/>
    <property type="match status" value="1"/>
</dbReference>
<dbReference type="Pfam" id="PF02826">
    <property type="entry name" value="2-Hacid_dh_C"/>
    <property type="match status" value="1"/>
</dbReference>
<dbReference type="SUPFAM" id="SSF52283">
    <property type="entry name" value="Formate/glycerate dehydrogenase catalytic domain-like"/>
    <property type="match status" value="1"/>
</dbReference>
<dbReference type="SUPFAM" id="SSF51735">
    <property type="entry name" value="NAD(P)-binding Rossmann-fold domains"/>
    <property type="match status" value="1"/>
</dbReference>
<dbReference type="PROSITE" id="PS00065">
    <property type="entry name" value="D_2_HYDROXYACID_DH_1"/>
    <property type="match status" value="1"/>
</dbReference>
<dbReference type="PROSITE" id="PS00670">
    <property type="entry name" value="D_2_HYDROXYACID_DH_2"/>
    <property type="match status" value="1"/>
</dbReference>
<dbReference type="PROSITE" id="PS00671">
    <property type="entry name" value="D_2_HYDROXYACID_DH_3"/>
    <property type="match status" value="1"/>
</dbReference>